<proteinExistence type="inferred from homology"/>
<gene>
    <name evidence="2" type="primary">mutM</name>
    <name evidence="2" type="synonym">fpg</name>
    <name type="ordered locus">Saro_0596</name>
</gene>
<feature type="initiator methionine" description="Removed" evidence="1">
    <location>
        <position position="1"/>
    </location>
</feature>
<feature type="chain" id="PRO_1000008729" description="Formamidopyrimidine-DNA glycosylase">
    <location>
        <begin position="2"/>
        <end position="270"/>
    </location>
</feature>
<feature type="zinc finger region" description="FPG-type" evidence="2">
    <location>
        <begin position="237"/>
        <end position="270"/>
    </location>
</feature>
<feature type="active site" description="Schiff-base intermediate with DNA" evidence="2">
    <location>
        <position position="2"/>
    </location>
</feature>
<feature type="active site" description="Proton donor" evidence="2">
    <location>
        <position position="3"/>
    </location>
</feature>
<feature type="active site" description="Proton donor; for beta-elimination activity" evidence="2">
    <location>
        <position position="58"/>
    </location>
</feature>
<feature type="active site" description="Proton donor; for delta-elimination activity" evidence="2">
    <location>
        <position position="260"/>
    </location>
</feature>
<feature type="binding site" evidence="2">
    <location>
        <position position="90"/>
    </location>
    <ligand>
        <name>DNA</name>
        <dbReference type="ChEBI" id="CHEBI:16991"/>
    </ligand>
</feature>
<feature type="binding site" evidence="2">
    <location>
        <position position="109"/>
    </location>
    <ligand>
        <name>DNA</name>
        <dbReference type="ChEBI" id="CHEBI:16991"/>
    </ligand>
</feature>
<feature type="binding site" evidence="2">
    <location>
        <position position="152"/>
    </location>
    <ligand>
        <name>DNA</name>
        <dbReference type="ChEBI" id="CHEBI:16991"/>
    </ligand>
</feature>
<name>FPG_NOVAD</name>
<reference key="1">
    <citation type="submission" date="2006-01" db="EMBL/GenBank/DDBJ databases">
        <title>Complete sequence of Novosphingobium aromaticivorans DSM 12444.</title>
        <authorList>
            <consortium name="US DOE Joint Genome Institute"/>
            <person name="Copeland A."/>
            <person name="Lucas S."/>
            <person name="Lapidus A."/>
            <person name="Barry K."/>
            <person name="Detter J.C."/>
            <person name="Glavina T."/>
            <person name="Hammon N."/>
            <person name="Israni S."/>
            <person name="Pitluck S."/>
            <person name="Chain P."/>
            <person name="Malfatti S."/>
            <person name="Shin M."/>
            <person name="Vergez L."/>
            <person name="Schmutz J."/>
            <person name="Larimer F."/>
            <person name="Land M."/>
            <person name="Kyrpides N."/>
            <person name="Ivanova N."/>
            <person name="Fredrickson J."/>
            <person name="Balkwill D."/>
            <person name="Romine M.F."/>
            <person name="Richardson P."/>
        </authorList>
    </citation>
    <scope>NUCLEOTIDE SEQUENCE [LARGE SCALE GENOMIC DNA]</scope>
    <source>
        <strain>ATCC 700278 / DSM 12444 / CCUG 56034 / CIP 105152 / NBRC 16084 / F199</strain>
    </source>
</reference>
<dbReference type="EC" id="3.2.2.23" evidence="2"/>
<dbReference type="EC" id="4.2.99.18" evidence="2"/>
<dbReference type="EMBL" id="CP000248">
    <property type="protein sequence ID" value="ABD25043.1"/>
    <property type="molecule type" value="Genomic_DNA"/>
</dbReference>
<dbReference type="RefSeq" id="WP_011444257.1">
    <property type="nucleotide sequence ID" value="NC_007794.1"/>
</dbReference>
<dbReference type="SMR" id="Q2GAT0"/>
<dbReference type="STRING" id="279238.Saro_0596"/>
<dbReference type="KEGG" id="nar:Saro_0596"/>
<dbReference type="eggNOG" id="COG0266">
    <property type="taxonomic scope" value="Bacteria"/>
</dbReference>
<dbReference type="HOGENOM" id="CLU_038423_1_1_5"/>
<dbReference type="Proteomes" id="UP000009134">
    <property type="component" value="Chromosome"/>
</dbReference>
<dbReference type="GO" id="GO:0034039">
    <property type="term" value="F:8-oxo-7,8-dihydroguanine DNA N-glycosylase activity"/>
    <property type="evidence" value="ECO:0007669"/>
    <property type="project" value="TreeGrafter"/>
</dbReference>
<dbReference type="GO" id="GO:0140078">
    <property type="term" value="F:class I DNA-(apurinic or apyrimidinic site) endonuclease activity"/>
    <property type="evidence" value="ECO:0007669"/>
    <property type="project" value="UniProtKB-EC"/>
</dbReference>
<dbReference type="GO" id="GO:0003684">
    <property type="term" value="F:damaged DNA binding"/>
    <property type="evidence" value="ECO:0007669"/>
    <property type="project" value="InterPro"/>
</dbReference>
<dbReference type="GO" id="GO:0008270">
    <property type="term" value="F:zinc ion binding"/>
    <property type="evidence" value="ECO:0007669"/>
    <property type="project" value="UniProtKB-UniRule"/>
</dbReference>
<dbReference type="GO" id="GO:0006284">
    <property type="term" value="P:base-excision repair"/>
    <property type="evidence" value="ECO:0007669"/>
    <property type="project" value="InterPro"/>
</dbReference>
<dbReference type="CDD" id="cd08966">
    <property type="entry name" value="EcFpg-like_N"/>
    <property type="match status" value="1"/>
</dbReference>
<dbReference type="FunFam" id="1.10.8.50:FF:000003">
    <property type="entry name" value="Formamidopyrimidine-DNA glycosylase"/>
    <property type="match status" value="1"/>
</dbReference>
<dbReference type="Gene3D" id="1.10.8.50">
    <property type="match status" value="1"/>
</dbReference>
<dbReference type="Gene3D" id="3.20.190.10">
    <property type="entry name" value="MutM-like, N-terminal"/>
    <property type="match status" value="1"/>
</dbReference>
<dbReference type="HAMAP" id="MF_00103">
    <property type="entry name" value="Fapy_DNA_glycosyl"/>
    <property type="match status" value="1"/>
</dbReference>
<dbReference type="InterPro" id="IPR015886">
    <property type="entry name" value="DNA_glyclase/AP_lyase_DNA-bd"/>
</dbReference>
<dbReference type="InterPro" id="IPR015887">
    <property type="entry name" value="DNA_glyclase_Znf_dom_DNA_BS"/>
</dbReference>
<dbReference type="InterPro" id="IPR020629">
    <property type="entry name" value="Formamido-pyr_DNA_Glyclase"/>
</dbReference>
<dbReference type="InterPro" id="IPR012319">
    <property type="entry name" value="FPG_cat"/>
</dbReference>
<dbReference type="InterPro" id="IPR035937">
    <property type="entry name" value="MutM-like_N-ter"/>
</dbReference>
<dbReference type="InterPro" id="IPR010979">
    <property type="entry name" value="Ribosomal_uS13-like_H2TH"/>
</dbReference>
<dbReference type="InterPro" id="IPR000214">
    <property type="entry name" value="Znf_DNA_glyclase/AP_lyase"/>
</dbReference>
<dbReference type="InterPro" id="IPR010663">
    <property type="entry name" value="Znf_FPG/IleRS"/>
</dbReference>
<dbReference type="NCBIfam" id="TIGR00577">
    <property type="entry name" value="fpg"/>
    <property type="match status" value="1"/>
</dbReference>
<dbReference type="NCBIfam" id="NF002211">
    <property type="entry name" value="PRK01103.1"/>
    <property type="match status" value="1"/>
</dbReference>
<dbReference type="PANTHER" id="PTHR22993">
    <property type="entry name" value="FORMAMIDOPYRIMIDINE-DNA GLYCOSYLASE"/>
    <property type="match status" value="1"/>
</dbReference>
<dbReference type="PANTHER" id="PTHR22993:SF9">
    <property type="entry name" value="FORMAMIDOPYRIMIDINE-DNA GLYCOSYLASE"/>
    <property type="match status" value="1"/>
</dbReference>
<dbReference type="Pfam" id="PF01149">
    <property type="entry name" value="Fapy_DNA_glyco"/>
    <property type="match status" value="1"/>
</dbReference>
<dbReference type="Pfam" id="PF06831">
    <property type="entry name" value="H2TH"/>
    <property type="match status" value="1"/>
</dbReference>
<dbReference type="Pfam" id="PF06827">
    <property type="entry name" value="zf-FPG_IleRS"/>
    <property type="match status" value="1"/>
</dbReference>
<dbReference type="SMART" id="SM00898">
    <property type="entry name" value="Fapy_DNA_glyco"/>
    <property type="match status" value="1"/>
</dbReference>
<dbReference type="SMART" id="SM01232">
    <property type="entry name" value="H2TH"/>
    <property type="match status" value="1"/>
</dbReference>
<dbReference type="SUPFAM" id="SSF57716">
    <property type="entry name" value="Glucocorticoid receptor-like (DNA-binding domain)"/>
    <property type="match status" value="1"/>
</dbReference>
<dbReference type="SUPFAM" id="SSF81624">
    <property type="entry name" value="N-terminal domain of MutM-like DNA repair proteins"/>
    <property type="match status" value="1"/>
</dbReference>
<dbReference type="SUPFAM" id="SSF46946">
    <property type="entry name" value="S13-like H2TH domain"/>
    <property type="match status" value="1"/>
</dbReference>
<dbReference type="PROSITE" id="PS51068">
    <property type="entry name" value="FPG_CAT"/>
    <property type="match status" value="1"/>
</dbReference>
<dbReference type="PROSITE" id="PS01242">
    <property type="entry name" value="ZF_FPG_1"/>
    <property type="match status" value="1"/>
</dbReference>
<dbReference type="PROSITE" id="PS51066">
    <property type="entry name" value="ZF_FPG_2"/>
    <property type="match status" value="1"/>
</dbReference>
<sequence length="270" mass="29697">MPELPEVETTVRGLATVLDGQVIRRVAVNRADLRRPFPEDLAQALTGARVTGMGRRAKYGLIHTDRERTMVFHLGMSGRWRIDPEDIGKHDHLVLETGEGRVLSLNDARRFGSVDLVDTGRLEEWPPFAALGPEPLGPGLKARHLAKAFEGRIAAVKLLLLDQQIVAGLGNIYVCEALYRARIHPEREGGKVSARALGLLVPAIRAVLEESIAAGGSTLRDYARPDGELGYFAKDWRVYGREGEPCQCGGVVKRIVQGGRSTFFCPRCQK</sequence>
<evidence type="ECO:0000250" key="1"/>
<evidence type="ECO:0000255" key="2">
    <source>
        <dbReference type="HAMAP-Rule" id="MF_00103"/>
    </source>
</evidence>
<comment type="function">
    <text evidence="2">Involved in base excision repair of DNA damaged by oxidation or by mutagenic agents. Acts as a DNA glycosylase that recognizes and removes damaged bases. Has a preference for oxidized purines, such as 7,8-dihydro-8-oxoguanine (8-oxoG). Has AP (apurinic/apyrimidinic) lyase activity and introduces nicks in the DNA strand. Cleaves the DNA backbone by beta-delta elimination to generate a single-strand break at the site of the removed base with both 3'- and 5'-phosphates.</text>
</comment>
<comment type="catalytic activity">
    <reaction evidence="2">
        <text>Hydrolysis of DNA containing ring-opened 7-methylguanine residues, releasing 2,6-diamino-4-hydroxy-5-(N-methyl)formamidopyrimidine.</text>
        <dbReference type="EC" id="3.2.2.23"/>
    </reaction>
</comment>
<comment type="catalytic activity">
    <reaction evidence="2">
        <text>2'-deoxyribonucleotide-(2'-deoxyribose 5'-phosphate)-2'-deoxyribonucleotide-DNA = a 3'-end 2'-deoxyribonucleotide-(2,3-dehydro-2,3-deoxyribose 5'-phosphate)-DNA + a 5'-end 5'-phospho-2'-deoxyribonucleoside-DNA + H(+)</text>
        <dbReference type="Rhea" id="RHEA:66592"/>
        <dbReference type="Rhea" id="RHEA-COMP:13180"/>
        <dbReference type="Rhea" id="RHEA-COMP:16897"/>
        <dbReference type="Rhea" id="RHEA-COMP:17067"/>
        <dbReference type="ChEBI" id="CHEBI:15378"/>
        <dbReference type="ChEBI" id="CHEBI:136412"/>
        <dbReference type="ChEBI" id="CHEBI:157695"/>
        <dbReference type="ChEBI" id="CHEBI:167181"/>
        <dbReference type="EC" id="4.2.99.18"/>
    </reaction>
</comment>
<comment type="cofactor">
    <cofactor evidence="2">
        <name>Zn(2+)</name>
        <dbReference type="ChEBI" id="CHEBI:29105"/>
    </cofactor>
    <text evidence="2">Binds 1 zinc ion per subunit.</text>
</comment>
<comment type="subunit">
    <text evidence="2">Monomer.</text>
</comment>
<comment type="similarity">
    <text evidence="2">Belongs to the FPG family.</text>
</comment>
<organism>
    <name type="scientific">Novosphingobium aromaticivorans (strain ATCC 700278 / DSM 12444 / CCUG 56034 / CIP 105152 / NBRC 16084 / F199)</name>
    <dbReference type="NCBI Taxonomy" id="279238"/>
    <lineage>
        <taxon>Bacteria</taxon>
        <taxon>Pseudomonadati</taxon>
        <taxon>Pseudomonadota</taxon>
        <taxon>Alphaproteobacteria</taxon>
        <taxon>Sphingomonadales</taxon>
        <taxon>Sphingomonadaceae</taxon>
        <taxon>Novosphingobium</taxon>
    </lineage>
</organism>
<keyword id="KW-0227">DNA damage</keyword>
<keyword id="KW-0234">DNA repair</keyword>
<keyword id="KW-0238">DNA-binding</keyword>
<keyword id="KW-0326">Glycosidase</keyword>
<keyword id="KW-0378">Hydrolase</keyword>
<keyword id="KW-0456">Lyase</keyword>
<keyword id="KW-0479">Metal-binding</keyword>
<keyword id="KW-0511">Multifunctional enzyme</keyword>
<keyword id="KW-1185">Reference proteome</keyword>
<keyword id="KW-0862">Zinc</keyword>
<keyword id="KW-0863">Zinc-finger</keyword>
<protein>
    <recommendedName>
        <fullName evidence="2">Formamidopyrimidine-DNA glycosylase</fullName>
        <shortName evidence="2">Fapy-DNA glycosylase</shortName>
        <ecNumber evidence="2">3.2.2.23</ecNumber>
    </recommendedName>
    <alternativeName>
        <fullName evidence="2">DNA-(apurinic or apyrimidinic site) lyase MutM</fullName>
        <shortName evidence="2">AP lyase MutM</shortName>
        <ecNumber evidence="2">4.2.99.18</ecNumber>
    </alternativeName>
</protein>
<accession>Q2GAT0</accession>